<keyword id="KW-0012">Acyltransferase</keyword>
<keyword id="KW-0028">Amino-acid biosynthesis</keyword>
<keyword id="KW-0963">Cytoplasm</keyword>
<keyword id="KW-0486">Methionine biosynthesis</keyword>
<keyword id="KW-1185">Reference proteome</keyword>
<keyword id="KW-0808">Transferase</keyword>
<gene>
    <name evidence="1" type="primary">metXA</name>
    <name type="ordered locus">DR_0872</name>
</gene>
<protein>
    <recommendedName>
        <fullName evidence="1">Homoserine O-acetyltransferase</fullName>
        <shortName evidence="1">HAT</shortName>
        <ecNumber evidence="1">2.3.1.31</ecNumber>
    </recommendedName>
    <alternativeName>
        <fullName evidence="1">Homoserine transacetylase</fullName>
        <shortName evidence="1">HTA</shortName>
    </alternativeName>
</protein>
<reference key="1">
    <citation type="journal article" date="1999" name="Science">
        <title>Genome sequence of the radioresistant bacterium Deinococcus radiodurans R1.</title>
        <authorList>
            <person name="White O."/>
            <person name="Eisen J.A."/>
            <person name="Heidelberg J.F."/>
            <person name="Hickey E.K."/>
            <person name="Peterson J.D."/>
            <person name="Dodson R.J."/>
            <person name="Haft D.H."/>
            <person name="Gwinn M.L."/>
            <person name="Nelson W.C."/>
            <person name="Richardson D.L."/>
            <person name="Moffat K.S."/>
            <person name="Qin H."/>
            <person name="Jiang L."/>
            <person name="Pamphile W."/>
            <person name="Crosby M."/>
            <person name="Shen M."/>
            <person name="Vamathevan J.J."/>
            <person name="Lam P."/>
            <person name="McDonald L.A."/>
            <person name="Utterback T.R."/>
            <person name="Zalewski C."/>
            <person name="Makarova K.S."/>
            <person name="Aravind L."/>
            <person name="Daly M.J."/>
            <person name="Minton K.W."/>
            <person name="Fleischmann R.D."/>
            <person name="Ketchum K.A."/>
            <person name="Nelson K.E."/>
            <person name="Salzberg S.L."/>
            <person name="Smith H.O."/>
            <person name="Venter J.C."/>
            <person name="Fraser C.M."/>
        </authorList>
    </citation>
    <scope>NUCLEOTIDE SEQUENCE [LARGE SCALE GENOMIC DNA]</scope>
    <source>
        <strain>ATCC 13939 / DSM 20539 / JCM 16871 / CCUG 27074 / LMG 4051 / NBRC 15346 / NCIMB 9279 / VKM B-1422 / R1</strain>
    </source>
</reference>
<feature type="chain" id="PRO_0000155716" description="Homoserine O-acetyltransferase">
    <location>
        <begin position="1"/>
        <end position="334"/>
    </location>
</feature>
<feature type="domain" description="AB hydrolase-1" evidence="1">
    <location>
        <begin position="61"/>
        <end position="318"/>
    </location>
</feature>
<feature type="active site" description="Nucleophile" evidence="1">
    <location>
        <position position="148"/>
    </location>
</feature>
<feature type="active site" evidence="1">
    <location>
        <position position="285"/>
    </location>
</feature>
<feature type="active site" evidence="1">
    <location>
        <position position="314"/>
    </location>
</feature>
<feature type="binding site" evidence="1">
    <location>
        <position position="205"/>
    </location>
    <ligand>
        <name>substrate</name>
    </ligand>
</feature>
<feature type="binding site" evidence="1">
    <location>
        <position position="315"/>
    </location>
    <ligand>
        <name>substrate</name>
    </ligand>
</feature>
<evidence type="ECO:0000255" key="1">
    <source>
        <dbReference type="HAMAP-Rule" id="MF_00296"/>
    </source>
</evidence>
<comment type="function">
    <text evidence="1">Transfers an acetyl group from acetyl-CoA to L-homoserine, forming acetyl-L-homoserine.</text>
</comment>
<comment type="catalytic activity">
    <reaction evidence="1">
        <text>L-homoserine + acetyl-CoA = O-acetyl-L-homoserine + CoA</text>
        <dbReference type="Rhea" id="RHEA:13701"/>
        <dbReference type="ChEBI" id="CHEBI:57287"/>
        <dbReference type="ChEBI" id="CHEBI:57288"/>
        <dbReference type="ChEBI" id="CHEBI:57476"/>
        <dbReference type="ChEBI" id="CHEBI:57716"/>
        <dbReference type="EC" id="2.3.1.31"/>
    </reaction>
</comment>
<comment type="pathway">
    <text evidence="1">Amino-acid biosynthesis; L-methionine biosynthesis via de novo pathway; O-acetyl-L-homoserine from L-homoserine: step 1/1.</text>
</comment>
<comment type="subunit">
    <text evidence="1">Homodimer.</text>
</comment>
<comment type="subcellular location">
    <subcellularLocation>
        <location evidence="1">Cytoplasm</location>
    </subcellularLocation>
</comment>
<comment type="similarity">
    <text evidence="1">Belongs to the AB hydrolase superfamily. MetX family.</text>
</comment>
<sequence>MTAVLAGHASALLLTEEPDCSGPQTVVLFRREPLLLDCGRALSDVRVAFHTYGTPRADATLVLHALTGDSAVHEWWPDFLGAGRPLDPADDYVVCANVLGGCAGTTSAAELAATCSGPVPLSLRDMARVGRALLDSLGVRRVRVIGASMGGMLAYAWLLECPDLVEKAVIIGAPARHSPWAIGLNTAARSAIALAPGGEGLKVARQIAMLSYRSPESLSRTQAGQRVPGVPAVTSYLHYQGEKLAARFDEQTYCALTWAMDAFQPSSADLKAVRAPVLVVGISSDLLYPAAEVRACAAELPHADYWELGSIHGHDAFLMDPQDLPERVGAFLRS</sequence>
<accession>Q9RVZ8</accession>
<name>METXA_DEIRA</name>
<organism>
    <name type="scientific">Deinococcus radiodurans (strain ATCC 13939 / DSM 20539 / JCM 16871 / CCUG 27074 / LMG 4051 / NBRC 15346 / NCIMB 9279 / VKM B-1422 / R1)</name>
    <dbReference type="NCBI Taxonomy" id="243230"/>
    <lineage>
        <taxon>Bacteria</taxon>
        <taxon>Thermotogati</taxon>
        <taxon>Deinococcota</taxon>
        <taxon>Deinococci</taxon>
        <taxon>Deinococcales</taxon>
        <taxon>Deinococcaceae</taxon>
        <taxon>Deinococcus</taxon>
    </lineage>
</organism>
<proteinExistence type="inferred from homology"/>
<dbReference type="EC" id="2.3.1.31" evidence="1"/>
<dbReference type="EMBL" id="AE000513">
    <property type="protein sequence ID" value="AAF10449.1"/>
    <property type="molecule type" value="Genomic_DNA"/>
</dbReference>
<dbReference type="PIR" id="F75463">
    <property type="entry name" value="F75463"/>
</dbReference>
<dbReference type="RefSeq" id="NP_294596.1">
    <property type="nucleotide sequence ID" value="NC_001263.1"/>
</dbReference>
<dbReference type="RefSeq" id="WP_010887517.1">
    <property type="nucleotide sequence ID" value="NC_001263.1"/>
</dbReference>
<dbReference type="SMR" id="Q9RVZ8"/>
<dbReference type="STRING" id="243230.DR_0872"/>
<dbReference type="ESTHER" id="deira-metx">
    <property type="family name" value="Homoserine_transacetylase"/>
</dbReference>
<dbReference type="PaxDb" id="243230-DR_0872"/>
<dbReference type="EnsemblBacteria" id="AAF10449">
    <property type="protein sequence ID" value="AAF10449"/>
    <property type="gene ID" value="DR_0872"/>
</dbReference>
<dbReference type="GeneID" id="69517117"/>
<dbReference type="KEGG" id="dra:DR_0872"/>
<dbReference type="PATRIC" id="fig|243230.17.peg.1057"/>
<dbReference type="eggNOG" id="COG2021">
    <property type="taxonomic scope" value="Bacteria"/>
</dbReference>
<dbReference type="HOGENOM" id="CLU_028760_1_2_0"/>
<dbReference type="InParanoid" id="Q9RVZ8"/>
<dbReference type="OrthoDB" id="9800754at2"/>
<dbReference type="UniPathway" id="UPA00051">
    <property type="reaction ID" value="UER00074"/>
</dbReference>
<dbReference type="Proteomes" id="UP000002524">
    <property type="component" value="Chromosome 1"/>
</dbReference>
<dbReference type="GO" id="GO:0005737">
    <property type="term" value="C:cytoplasm"/>
    <property type="evidence" value="ECO:0007669"/>
    <property type="project" value="UniProtKB-SubCell"/>
</dbReference>
<dbReference type="GO" id="GO:0004414">
    <property type="term" value="F:homoserine O-acetyltransferase activity"/>
    <property type="evidence" value="ECO:0000318"/>
    <property type="project" value="GO_Central"/>
</dbReference>
<dbReference type="GO" id="GO:0009086">
    <property type="term" value="P:methionine biosynthetic process"/>
    <property type="evidence" value="ECO:0000318"/>
    <property type="project" value="GO_Central"/>
</dbReference>
<dbReference type="Gene3D" id="3.40.50.1820">
    <property type="entry name" value="alpha/beta hydrolase"/>
    <property type="match status" value="1"/>
</dbReference>
<dbReference type="HAMAP" id="MF_00296">
    <property type="entry name" value="MetX_acyltransf"/>
    <property type="match status" value="1"/>
</dbReference>
<dbReference type="InterPro" id="IPR000073">
    <property type="entry name" value="AB_hydrolase_1"/>
</dbReference>
<dbReference type="InterPro" id="IPR029058">
    <property type="entry name" value="AB_hydrolase_fold"/>
</dbReference>
<dbReference type="InterPro" id="IPR008220">
    <property type="entry name" value="HAT_MetX-like"/>
</dbReference>
<dbReference type="PANTHER" id="PTHR32268">
    <property type="entry name" value="HOMOSERINE O-ACETYLTRANSFERASE"/>
    <property type="match status" value="1"/>
</dbReference>
<dbReference type="PANTHER" id="PTHR32268:SF11">
    <property type="entry name" value="HOMOSERINE O-ACETYLTRANSFERASE"/>
    <property type="match status" value="1"/>
</dbReference>
<dbReference type="Pfam" id="PF00561">
    <property type="entry name" value="Abhydrolase_1"/>
    <property type="match status" value="1"/>
</dbReference>
<dbReference type="PIRSF" id="PIRSF000443">
    <property type="entry name" value="Homoser_Ac_trans"/>
    <property type="match status" value="1"/>
</dbReference>
<dbReference type="SUPFAM" id="SSF53474">
    <property type="entry name" value="alpha/beta-Hydrolases"/>
    <property type="match status" value="1"/>
</dbReference>